<protein>
    <recommendedName>
        <fullName evidence="1">Pyridoxal kinase PdxY</fullName>
        <shortName evidence="1">PL kinase</shortName>
        <ecNumber evidence="1">2.7.1.35</ecNumber>
    </recommendedName>
</protein>
<gene>
    <name evidence="1" type="primary">pdxY</name>
    <name type="ordered locus">PSEEN5509</name>
</gene>
<proteinExistence type="inferred from homology"/>
<evidence type="ECO:0000255" key="1">
    <source>
        <dbReference type="HAMAP-Rule" id="MF_01639"/>
    </source>
</evidence>
<feature type="chain" id="PRO_1000069888" description="Pyridoxal kinase PdxY">
    <location>
        <begin position="1"/>
        <end position="290"/>
    </location>
</feature>
<feature type="binding site" evidence="1">
    <location>
        <position position="12"/>
    </location>
    <ligand>
        <name>substrate</name>
    </ligand>
</feature>
<feature type="binding site" evidence="1">
    <location>
        <begin position="47"/>
        <end position="48"/>
    </location>
    <ligand>
        <name>substrate</name>
    </ligand>
</feature>
<feature type="binding site" evidence="1">
    <location>
        <position position="114"/>
    </location>
    <ligand>
        <name>ATP</name>
        <dbReference type="ChEBI" id="CHEBI:30616"/>
    </ligand>
</feature>
<feature type="binding site" evidence="1">
    <location>
        <position position="151"/>
    </location>
    <ligand>
        <name>ATP</name>
        <dbReference type="ChEBI" id="CHEBI:30616"/>
    </ligand>
</feature>
<feature type="binding site" evidence="1">
    <location>
        <position position="184"/>
    </location>
    <ligand>
        <name>ATP</name>
        <dbReference type="ChEBI" id="CHEBI:30616"/>
    </ligand>
</feature>
<feature type="binding site" evidence="1">
    <location>
        <begin position="211"/>
        <end position="214"/>
    </location>
    <ligand>
        <name>ATP</name>
        <dbReference type="ChEBI" id="CHEBI:30616"/>
    </ligand>
</feature>
<feature type="binding site" evidence="1">
    <location>
        <position position="225"/>
    </location>
    <ligand>
        <name>substrate</name>
    </ligand>
</feature>
<dbReference type="EC" id="2.7.1.35" evidence="1"/>
<dbReference type="EMBL" id="CT573326">
    <property type="protein sequence ID" value="CAK18118.1"/>
    <property type="molecule type" value="Genomic_DNA"/>
</dbReference>
<dbReference type="RefSeq" id="WP_011536470.1">
    <property type="nucleotide sequence ID" value="NC_008027.1"/>
</dbReference>
<dbReference type="SMR" id="Q1I2L8"/>
<dbReference type="STRING" id="384676.PSEEN5509"/>
<dbReference type="GeneID" id="32808412"/>
<dbReference type="KEGG" id="pen:PSEEN5509"/>
<dbReference type="eggNOG" id="COG2240">
    <property type="taxonomic scope" value="Bacteria"/>
</dbReference>
<dbReference type="HOGENOM" id="CLU_046496_3_0_6"/>
<dbReference type="OrthoDB" id="9800808at2"/>
<dbReference type="UniPathway" id="UPA01068">
    <property type="reaction ID" value="UER00298"/>
</dbReference>
<dbReference type="Proteomes" id="UP000000658">
    <property type="component" value="Chromosome"/>
</dbReference>
<dbReference type="GO" id="GO:0005829">
    <property type="term" value="C:cytosol"/>
    <property type="evidence" value="ECO:0007669"/>
    <property type="project" value="TreeGrafter"/>
</dbReference>
<dbReference type="GO" id="GO:0005524">
    <property type="term" value="F:ATP binding"/>
    <property type="evidence" value="ECO:0007669"/>
    <property type="project" value="UniProtKB-UniRule"/>
</dbReference>
<dbReference type="GO" id="GO:0000287">
    <property type="term" value="F:magnesium ion binding"/>
    <property type="evidence" value="ECO:0007669"/>
    <property type="project" value="UniProtKB-UniRule"/>
</dbReference>
<dbReference type="GO" id="GO:0008478">
    <property type="term" value="F:pyridoxal kinase activity"/>
    <property type="evidence" value="ECO:0007669"/>
    <property type="project" value="UniProtKB-UniRule"/>
</dbReference>
<dbReference type="GO" id="GO:0009443">
    <property type="term" value="P:pyridoxal 5'-phosphate salvage"/>
    <property type="evidence" value="ECO:0007669"/>
    <property type="project" value="UniProtKB-UniRule"/>
</dbReference>
<dbReference type="CDD" id="cd01173">
    <property type="entry name" value="pyridoxal_pyridoxamine_kinase"/>
    <property type="match status" value="1"/>
</dbReference>
<dbReference type="FunFam" id="3.40.1190.20:FF:000008">
    <property type="entry name" value="Pyridoxal kinase PdxY"/>
    <property type="match status" value="1"/>
</dbReference>
<dbReference type="Gene3D" id="3.40.1190.20">
    <property type="match status" value="1"/>
</dbReference>
<dbReference type="HAMAP" id="MF_01639">
    <property type="entry name" value="PdxY"/>
    <property type="match status" value="1"/>
</dbReference>
<dbReference type="InterPro" id="IPR013749">
    <property type="entry name" value="PM/HMP-P_kinase-1"/>
</dbReference>
<dbReference type="InterPro" id="IPR004625">
    <property type="entry name" value="PyrdxlKinase"/>
</dbReference>
<dbReference type="InterPro" id="IPR023685">
    <property type="entry name" value="Pyridoxal_kinase_PdxY"/>
</dbReference>
<dbReference type="InterPro" id="IPR029056">
    <property type="entry name" value="Ribokinase-like"/>
</dbReference>
<dbReference type="NCBIfam" id="NF004398">
    <property type="entry name" value="PRK05756.1"/>
    <property type="match status" value="1"/>
</dbReference>
<dbReference type="NCBIfam" id="TIGR00687">
    <property type="entry name" value="pyridox_kin"/>
    <property type="match status" value="1"/>
</dbReference>
<dbReference type="PANTHER" id="PTHR10534">
    <property type="entry name" value="PYRIDOXAL KINASE"/>
    <property type="match status" value="1"/>
</dbReference>
<dbReference type="PANTHER" id="PTHR10534:SF2">
    <property type="entry name" value="PYRIDOXAL KINASE"/>
    <property type="match status" value="1"/>
</dbReference>
<dbReference type="Pfam" id="PF08543">
    <property type="entry name" value="Phos_pyr_kin"/>
    <property type="match status" value="1"/>
</dbReference>
<dbReference type="SUPFAM" id="SSF53613">
    <property type="entry name" value="Ribokinase-like"/>
    <property type="match status" value="1"/>
</dbReference>
<name>PDXY_PSEE4</name>
<reference key="1">
    <citation type="journal article" date="2006" name="Nat. Biotechnol.">
        <title>Complete genome sequence of the entomopathogenic and metabolically versatile soil bacterium Pseudomonas entomophila.</title>
        <authorList>
            <person name="Vodovar N."/>
            <person name="Vallenet D."/>
            <person name="Cruveiller S."/>
            <person name="Rouy Z."/>
            <person name="Barbe V."/>
            <person name="Acosta C."/>
            <person name="Cattolico L."/>
            <person name="Jubin C."/>
            <person name="Lajus A."/>
            <person name="Segurens B."/>
            <person name="Vacherie B."/>
            <person name="Wincker P."/>
            <person name="Weissenbach J."/>
            <person name="Lemaitre B."/>
            <person name="Medigue C."/>
            <person name="Boccard F."/>
        </authorList>
    </citation>
    <scope>NUCLEOTIDE SEQUENCE [LARGE SCALE GENOMIC DNA]</scope>
    <source>
        <strain>L48</strain>
    </source>
</reference>
<organism>
    <name type="scientific">Pseudomonas entomophila (strain L48)</name>
    <dbReference type="NCBI Taxonomy" id="384676"/>
    <lineage>
        <taxon>Bacteria</taxon>
        <taxon>Pseudomonadati</taxon>
        <taxon>Pseudomonadota</taxon>
        <taxon>Gammaproteobacteria</taxon>
        <taxon>Pseudomonadales</taxon>
        <taxon>Pseudomonadaceae</taxon>
        <taxon>Pseudomonas</taxon>
    </lineage>
</organism>
<sequence>MKRTPHLLAIQSHVVFGHAGNSAAVFPMQRVGVNVWPLNTVQFSNHTQYGQWAGEVLAPAQIPALVEGISNIGELGNCDAVLSGYLGSAEQGRAILAGVARIKAVNPKALYLCDPVMGHAEKGCIVPAEVSEFLLEEAVAKADILCPNQLELDSFCGRRAESLEDCVGMARGLLERGPRIVLVKHLNYPGRADDAFEMLLVTGEESWHLRRPLLAFPRQPVGVGDLTSGLFMARLLLGDSDVQAFEFAAAAVHEVLLETQACASYELQLVRAQDRIAHPRVRFEAQRLLY</sequence>
<comment type="function">
    <text evidence="1">Pyridoxal kinase involved in the salvage pathway of pyridoxal 5'-phosphate (PLP). Catalyzes the phosphorylation of pyridoxal to PLP.</text>
</comment>
<comment type="catalytic activity">
    <reaction evidence="1">
        <text>pyridoxal + ATP = pyridoxal 5'-phosphate + ADP + H(+)</text>
        <dbReference type="Rhea" id="RHEA:10224"/>
        <dbReference type="ChEBI" id="CHEBI:15378"/>
        <dbReference type="ChEBI" id="CHEBI:17310"/>
        <dbReference type="ChEBI" id="CHEBI:30616"/>
        <dbReference type="ChEBI" id="CHEBI:456216"/>
        <dbReference type="ChEBI" id="CHEBI:597326"/>
        <dbReference type="EC" id="2.7.1.35"/>
    </reaction>
</comment>
<comment type="cofactor">
    <cofactor evidence="1">
        <name>Mg(2+)</name>
        <dbReference type="ChEBI" id="CHEBI:18420"/>
    </cofactor>
</comment>
<comment type="pathway">
    <text evidence="1">Cofactor metabolism; pyridoxal 5'-phosphate salvage; pyridoxal 5'-phosphate from pyridoxal: step 1/1.</text>
</comment>
<comment type="subunit">
    <text evidence="1">Homodimer.</text>
</comment>
<comment type="similarity">
    <text evidence="1">Belongs to the pyridoxine kinase family. PdxY subfamily.</text>
</comment>
<accession>Q1I2L8</accession>
<keyword id="KW-0067">ATP-binding</keyword>
<keyword id="KW-0418">Kinase</keyword>
<keyword id="KW-0460">Magnesium</keyword>
<keyword id="KW-0547">Nucleotide-binding</keyword>
<keyword id="KW-0808">Transferase</keyword>